<protein>
    <recommendedName>
        <fullName evidence="1">Lipid-A-disaccharide synthase</fullName>
        <ecNumber evidence="1">2.4.1.182</ecNumber>
    </recommendedName>
</protein>
<gene>
    <name evidence="1" type="primary">lpxB</name>
    <name type="ordered locus">RT0311</name>
</gene>
<name>LPXB_RICTY</name>
<sequence>MKKIYFIAGEMSGDFIGGHIIQNLKSNEGLEFTGIGGQYMEEAGNFKSLFTITAINFIGFIEIIPHLLKIKKLIDKTVENIINSKVDLLITIDSPGFTYRVAKRVRKFLPNLKIIHIVAPSVWAYKAGRAVDYAKIYDCLFALLPFEPPYFTKVGLDCRYIGHPILEQEFYRDKIALRKEFKIDDNESILCVTFGTRKGEILRHLPIFITAIQKISKDYKNLRIIFPLVHPDHEAIIKPFLENVQFNYLFLSSERLKAYAVSDLALAKSGTNTLEISASGTPMVVAYKVNIISFFIIMFLIKIKYVSLINIMAGSAIIPEFIQFNCRANLISNKLKELLSNSQKRDNQVVESQKILQKLRFASDRSPSYIAAKIIKQEFL</sequence>
<accession>Q68X51</accession>
<comment type="function">
    <text evidence="1">Condensation of UDP-2,3-diacylglucosamine and 2,3-diacylglucosamine-1-phosphate to form lipid A disaccharide, a precursor of lipid A, a phosphorylated glycolipid that anchors the lipopolysaccharide to the outer membrane of the cell.</text>
</comment>
<comment type="catalytic activity">
    <reaction evidence="1">
        <text>a lipid X + a UDP-2-N,3-O-bis[(3R)-3-hydroxyacyl]-alpha-D-glucosamine = a lipid A disaccharide + UDP + H(+)</text>
        <dbReference type="Rhea" id="RHEA:67828"/>
        <dbReference type="ChEBI" id="CHEBI:15378"/>
        <dbReference type="ChEBI" id="CHEBI:58223"/>
        <dbReference type="ChEBI" id="CHEBI:137748"/>
        <dbReference type="ChEBI" id="CHEBI:176338"/>
        <dbReference type="ChEBI" id="CHEBI:176343"/>
        <dbReference type="EC" id="2.4.1.182"/>
    </reaction>
</comment>
<comment type="pathway">
    <text evidence="1">Bacterial outer membrane biogenesis; LPS lipid A biosynthesis.</text>
</comment>
<comment type="similarity">
    <text evidence="1">Belongs to the LpxB family.</text>
</comment>
<dbReference type="EC" id="2.4.1.182" evidence="1"/>
<dbReference type="EMBL" id="AE017197">
    <property type="protein sequence ID" value="AAU03791.1"/>
    <property type="molecule type" value="Genomic_DNA"/>
</dbReference>
<dbReference type="RefSeq" id="WP_011190775.1">
    <property type="nucleotide sequence ID" value="NC_006142.1"/>
</dbReference>
<dbReference type="SMR" id="Q68X51"/>
<dbReference type="CAZy" id="GT19">
    <property type="family name" value="Glycosyltransferase Family 19"/>
</dbReference>
<dbReference type="KEGG" id="rty:RT0311"/>
<dbReference type="eggNOG" id="COG0763">
    <property type="taxonomic scope" value="Bacteria"/>
</dbReference>
<dbReference type="HOGENOM" id="CLU_036577_2_0_5"/>
<dbReference type="OrthoDB" id="9801642at2"/>
<dbReference type="UniPathway" id="UPA00973"/>
<dbReference type="Proteomes" id="UP000000604">
    <property type="component" value="Chromosome"/>
</dbReference>
<dbReference type="GO" id="GO:0016020">
    <property type="term" value="C:membrane"/>
    <property type="evidence" value="ECO:0007669"/>
    <property type="project" value="GOC"/>
</dbReference>
<dbReference type="GO" id="GO:0008915">
    <property type="term" value="F:lipid-A-disaccharide synthase activity"/>
    <property type="evidence" value="ECO:0007669"/>
    <property type="project" value="UniProtKB-UniRule"/>
</dbReference>
<dbReference type="GO" id="GO:0005543">
    <property type="term" value="F:phospholipid binding"/>
    <property type="evidence" value="ECO:0007669"/>
    <property type="project" value="TreeGrafter"/>
</dbReference>
<dbReference type="GO" id="GO:0009245">
    <property type="term" value="P:lipid A biosynthetic process"/>
    <property type="evidence" value="ECO:0007669"/>
    <property type="project" value="UniProtKB-UniRule"/>
</dbReference>
<dbReference type="HAMAP" id="MF_00392">
    <property type="entry name" value="LpxB"/>
    <property type="match status" value="1"/>
</dbReference>
<dbReference type="InterPro" id="IPR003835">
    <property type="entry name" value="Glyco_trans_19"/>
</dbReference>
<dbReference type="NCBIfam" id="TIGR00215">
    <property type="entry name" value="lpxB"/>
    <property type="match status" value="1"/>
</dbReference>
<dbReference type="PANTHER" id="PTHR30372">
    <property type="entry name" value="LIPID-A-DISACCHARIDE SYNTHASE"/>
    <property type="match status" value="1"/>
</dbReference>
<dbReference type="PANTHER" id="PTHR30372:SF4">
    <property type="entry name" value="LIPID-A-DISACCHARIDE SYNTHASE, MITOCHONDRIAL-RELATED"/>
    <property type="match status" value="1"/>
</dbReference>
<dbReference type="Pfam" id="PF02684">
    <property type="entry name" value="LpxB"/>
    <property type="match status" value="1"/>
</dbReference>
<dbReference type="SUPFAM" id="SSF53756">
    <property type="entry name" value="UDP-Glycosyltransferase/glycogen phosphorylase"/>
    <property type="match status" value="1"/>
</dbReference>
<proteinExistence type="inferred from homology"/>
<evidence type="ECO:0000255" key="1">
    <source>
        <dbReference type="HAMAP-Rule" id="MF_00392"/>
    </source>
</evidence>
<organism>
    <name type="scientific">Rickettsia typhi (strain ATCC VR-144 / Wilmington)</name>
    <dbReference type="NCBI Taxonomy" id="257363"/>
    <lineage>
        <taxon>Bacteria</taxon>
        <taxon>Pseudomonadati</taxon>
        <taxon>Pseudomonadota</taxon>
        <taxon>Alphaproteobacteria</taxon>
        <taxon>Rickettsiales</taxon>
        <taxon>Rickettsiaceae</taxon>
        <taxon>Rickettsieae</taxon>
        <taxon>Rickettsia</taxon>
        <taxon>typhus group</taxon>
    </lineage>
</organism>
<keyword id="KW-0328">Glycosyltransferase</keyword>
<keyword id="KW-0441">Lipid A biosynthesis</keyword>
<keyword id="KW-0444">Lipid biosynthesis</keyword>
<keyword id="KW-0443">Lipid metabolism</keyword>
<keyword id="KW-0808">Transferase</keyword>
<feature type="chain" id="PRO_0000255219" description="Lipid-A-disaccharide synthase">
    <location>
        <begin position="1"/>
        <end position="380"/>
    </location>
</feature>
<reference key="1">
    <citation type="journal article" date="2004" name="J. Bacteriol.">
        <title>Complete genome sequence of Rickettsia typhi and comparison with sequences of other Rickettsiae.</title>
        <authorList>
            <person name="McLeod M.P."/>
            <person name="Qin X."/>
            <person name="Karpathy S.E."/>
            <person name="Gioia J."/>
            <person name="Highlander S.K."/>
            <person name="Fox G.E."/>
            <person name="McNeill T.Z."/>
            <person name="Jiang H."/>
            <person name="Muzny D."/>
            <person name="Jacob L.S."/>
            <person name="Hawes A.C."/>
            <person name="Sodergren E."/>
            <person name="Gill R."/>
            <person name="Hume J."/>
            <person name="Morgan M."/>
            <person name="Fan G."/>
            <person name="Amin A.G."/>
            <person name="Gibbs R.A."/>
            <person name="Hong C."/>
            <person name="Yu X.-J."/>
            <person name="Walker D.H."/>
            <person name="Weinstock G.M."/>
        </authorList>
    </citation>
    <scope>NUCLEOTIDE SEQUENCE [LARGE SCALE GENOMIC DNA]</scope>
    <source>
        <strain>ATCC VR-144 / Wilmington</strain>
    </source>
</reference>